<gene>
    <name evidence="1" type="primary">asnS</name>
    <name type="ordered locus">SaurJH1_1542</name>
</gene>
<comment type="catalytic activity">
    <reaction evidence="1">
        <text>tRNA(Asn) + L-asparagine + ATP = L-asparaginyl-tRNA(Asn) + AMP + diphosphate + H(+)</text>
        <dbReference type="Rhea" id="RHEA:11180"/>
        <dbReference type="Rhea" id="RHEA-COMP:9659"/>
        <dbReference type="Rhea" id="RHEA-COMP:9674"/>
        <dbReference type="ChEBI" id="CHEBI:15378"/>
        <dbReference type="ChEBI" id="CHEBI:30616"/>
        <dbReference type="ChEBI" id="CHEBI:33019"/>
        <dbReference type="ChEBI" id="CHEBI:58048"/>
        <dbReference type="ChEBI" id="CHEBI:78442"/>
        <dbReference type="ChEBI" id="CHEBI:78515"/>
        <dbReference type="ChEBI" id="CHEBI:456215"/>
        <dbReference type="EC" id="6.1.1.22"/>
    </reaction>
</comment>
<comment type="subunit">
    <text evidence="1">Homodimer.</text>
</comment>
<comment type="subcellular location">
    <subcellularLocation>
        <location evidence="1">Cytoplasm</location>
    </subcellularLocation>
</comment>
<comment type="similarity">
    <text evidence="1">Belongs to the class-II aminoacyl-tRNA synthetase family.</text>
</comment>
<reference key="1">
    <citation type="submission" date="2007-06" db="EMBL/GenBank/DDBJ databases">
        <title>Complete sequence of chromosome of Staphylococcus aureus subsp. aureus JH1.</title>
        <authorList>
            <consortium name="US DOE Joint Genome Institute"/>
            <person name="Copeland A."/>
            <person name="Lucas S."/>
            <person name="Lapidus A."/>
            <person name="Barry K."/>
            <person name="Detter J.C."/>
            <person name="Glavina del Rio T."/>
            <person name="Hammon N."/>
            <person name="Israni S."/>
            <person name="Dalin E."/>
            <person name="Tice H."/>
            <person name="Pitluck S."/>
            <person name="Chain P."/>
            <person name="Malfatti S."/>
            <person name="Shin M."/>
            <person name="Vergez L."/>
            <person name="Schmutz J."/>
            <person name="Larimer F."/>
            <person name="Land M."/>
            <person name="Hauser L."/>
            <person name="Kyrpides N."/>
            <person name="Ivanova N."/>
            <person name="Tomasz A."/>
            <person name="Richardson P."/>
        </authorList>
    </citation>
    <scope>NUCLEOTIDE SEQUENCE [LARGE SCALE GENOMIC DNA]</scope>
    <source>
        <strain>JH1</strain>
    </source>
</reference>
<feature type="chain" id="PRO_1000081858" description="Asparagine--tRNA ligase">
    <location>
        <begin position="1"/>
        <end position="430"/>
    </location>
</feature>
<keyword id="KW-0030">Aminoacyl-tRNA synthetase</keyword>
<keyword id="KW-0067">ATP-binding</keyword>
<keyword id="KW-0963">Cytoplasm</keyword>
<keyword id="KW-0436">Ligase</keyword>
<keyword id="KW-0547">Nucleotide-binding</keyword>
<keyword id="KW-0648">Protein biosynthesis</keyword>
<organism>
    <name type="scientific">Staphylococcus aureus (strain JH1)</name>
    <dbReference type="NCBI Taxonomy" id="359787"/>
    <lineage>
        <taxon>Bacteria</taxon>
        <taxon>Bacillati</taxon>
        <taxon>Bacillota</taxon>
        <taxon>Bacilli</taxon>
        <taxon>Bacillales</taxon>
        <taxon>Staphylococcaceae</taxon>
        <taxon>Staphylococcus</taxon>
    </lineage>
</organism>
<evidence type="ECO:0000255" key="1">
    <source>
        <dbReference type="HAMAP-Rule" id="MF_00534"/>
    </source>
</evidence>
<sequence length="430" mass="49128">MKTTIKQAKDHLNQDVTIGAWLTNKRSSGKIAFLQLRDGTGFMQGVVVKSEVDEEVFKLAKEIAQESSLYVTGTITEDNRSDLGYEMQVKSIEVISEAHDYPITPKNHGTEFLMDHRHLWLRSKKQHAVMKIRNEVIRATYEFFNKDGFTKVDPPILTASAPEGTSELFHTKYFDQDAFLSQSGQLYLEAAAMAHGKVFSFGPTFRAEKSKTRRHLIEFWMIEGEMAFTNHAESLEIQEQYVTHVVKSVLENCKLELKILERDTSKLEKVATPFPRISYDDAIEFLKAEGFDDIEWGEDFGAPHETAIANHYDLPVFITNYPTKIKPFYMQPNPENEETVLCADLIAPEGYGEIIGGSERVDDLELLEQRVKEHGLDEEAYSYYLDLRRYGSVPHCGFGLGLERTVAWISGVEHVRETAPFPRLLNRLYP</sequence>
<proteinExistence type="inferred from homology"/>
<name>SYN_STAA2</name>
<dbReference type="EC" id="6.1.1.22" evidence="1"/>
<dbReference type="EMBL" id="CP000736">
    <property type="protein sequence ID" value="ABR52391.1"/>
    <property type="molecule type" value="Genomic_DNA"/>
</dbReference>
<dbReference type="SMR" id="A6U1S3"/>
<dbReference type="KEGG" id="sah:SaurJH1_1542"/>
<dbReference type="HOGENOM" id="CLU_004553_2_0_9"/>
<dbReference type="GO" id="GO:0005737">
    <property type="term" value="C:cytoplasm"/>
    <property type="evidence" value="ECO:0007669"/>
    <property type="project" value="UniProtKB-SubCell"/>
</dbReference>
<dbReference type="GO" id="GO:0004816">
    <property type="term" value="F:asparagine-tRNA ligase activity"/>
    <property type="evidence" value="ECO:0007669"/>
    <property type="project" value="UniProtKB-UniRule"/>
</dbReference>
<dbReference type="GO" id="GO:0005524">
    <property type="term" value="F:ATP binding"/>
    <property type="evidence" value="ECO:0007669"/>
    <property type="project" value="UniProtKB-UniRule"/>
</dbReference>
<dbReference type="GO" id="GO:0140096">
    <property type="term" value="F:catalytic activity, acting on a protein"/>
    <property type="evidence" value="ECO:0007669"/>
    <property type="project" value="UniProtKB-ARBA"/>
</dbReference>
<dbReference type="GO" id="GO:0003676">
    <property type="term" value="F:nucleic acid binding"/>
    <property type="evidence" value="ECO:0007669"/>
    <property type="project" value="InterPro"/>
</dbReference>
<dbReference type="GO" id="GO:0016740">
    <property type="term" value="F:transferase activity"/>
    <property type="evidence" value="ECO:0007669"/>
    <property type="project" value="UniProtKB-ARBA"/>
</dbReference>
<dbReference type="GO" id="GO:0006421">
    <property type="term" value="P:asparaginyl-tRNA aminoacylation"/>
    <property type="evidence" value="ECO:0007669"/>
    <property type="project" value="UniProtKB-UniRule"/>
</dbReference>
<dbReference type="CDD" id="cd04323">
    <property type="entry name" value="AsnRS_cyto_like_N"/>
    <property type="match status" value="1"/>
</dbReference>
<dbReference type="CDD" id="cd00776">
    <property type="entry name" value="AsxRS_core"/>
    <property type="match status" value="1"/>
</dbReference>
<dbReference type="Gene3D" id="3.30.930.10">
    <property type="entry name" value="Bira Bifunctional Protein, Domain 2"/>
    <property type="match status" value="1"/>
</dbReference>
<dbReference type="Gene3D" id="2.40.50.140">
    <property type="entry name" value="Nucleic acid-binding proteins"/>
    <property type="match status" value="1"/>
</dbReference>
<dbReference type="HAMAP" id="MF_00534">
    <property type="entry name" value="Asn_tRNA_synth"/>
    <property type="match status" value="1"/>
</dbReference>
<dbReference type="InterPro" id="IPR004364">
    <property type="entry name" value="Aa-tRNA-synt_II"/>
</dbReference>
<dbReference type="InterPro" id="IPR006195">
    <property type="entry name" value="aa-tRNA-synth_II"/>
</dbReference>
<dbReference type="InterPro" id="IPR045864">
    <property type="entry name" value="aa-tRNA-synth_II/BPL/LPL"/>
</dbReference>
<dbReference type="InterPro" id="IPR004522">
    <property type="entry name" value="Asn-tRNA-ligase"/>
</dbReference>
<dbReference type="InterPro" id="IPR002312">
    <property type="entry name" value="Asp/Asn-tRNA-synth_IIb"/>
</dbReference>
<dbReference type="InterPro" id="IPR012340">
    <property type="entry name" value="NA-bd_OB-fold"/>
</dbReference>
<dbReference type="InterPro" id="IPR004365">
    <property type="entry name" value="NA-bd_OB_tRNA"/>
</dbReference>
<dbReference type="NCBIfam" id="TIGR00457">
    <property type="entry name" value="asnS"/>
    <property type="match status" value="1"/>
</dbReference>
<dbReference type="NCBIfam" id="NF003037">
    <property type="entry name" value="PRK03932.1"/>
    <property type="match status" value="1"/>
</dbReference>
<dbReference type="NCBIfam" id="NF003483">
    <property type="entry name" value="PRK05159.1"/>
    <property type="match status" value="1"/>
</dbReference>
<dbReference type="PANTHER" id="PTHR22594:SF34">
    <property type="entry name" value="ASPARAGINE--TRNA LIGASE, MITOCHONDRIAL-RELATED"/>
    <property type="match status" value="1"/>
</dbReference>
<dbReference type="PANTHER" id="PTHR22594">
    <property type="entry name" value="ASPARTYL/LYSYL-TRNA SYNTHETASE"/>
    <property type="match status" value="1"/>
</dbReference>
<dbReference type="Pfam" id="PF00152">
    <property type="entry name" value="tRNA-synt_2"/>
    <property type="match status" value="1"/>
</dbReference>
<dbReference type="Pfam" id="PF01336">
    <property type="entry name" value="tRNA_anti-codon"/>
    <property type="match status" value="1"/>
</dbReference>
<dbReference type="PRINTS" id="PR01042">
    <property type="entry name" value="TRNASYNTHASP"/>
</dbReference>
<dbReference type="SUPFAM" id="SSF55681">
    <property type="entry name" value="Class II aaRS and biotin synthetases"/>
    <property type="match status" value="1"/>
</dbReference>
<dbReference type="SUPFAM" id="SSF50249">
    <property type="entry name" value="Nucleic acid-binding proteins"/>
    <property type="match status" value="1"/>
</dbReference>
<dbReference type="PROSITE" id="PS50862">
    <property type="entry name" value="AA_TRNA_LIGASE_II"/>
    <property type="match status" value="1"/>
</dbReference>
<accession>A6U1S3</accession>
<protein>
    <recommendedName>
        <fullName evidence="1">Asparagine--tRNA ligase</fullName>
        <ecNumber evidence="1">6.1.1.22</ecNumber>
    </recommendedName>
    <alternativeName>
        <fullName evidence="1">Asparaginyl-tRNA synthetase</fullName>
        <shortName evidence="1">AsnRS</shortName>
    </alternativeName>
</protein>